<reference key="1">
    <citation type="journal article" date="2004" name="Microbiology">
        <title>The Serratia gene cluster encoding biosynthesis of the red antibiotic, prodigiosin, shows species- and strain-dependent genome context variation.</title>
        <authorList>
            <person name="Harris A.K."/>
            <person name="Williamson N.R."/>
            <person name="Slater H."/>
            <person name="Cox A."/>
            <person name="Abbasi S."/>
            <person name="Foulds I."/>
            <person name="Simonsen H.T."/>
            <person name="Leeper F.J."/>
            <person name="Salmond G.P."/>
        </authorList>
    </citation>
    <scope>NUCLEOTIDE SEQUENCE [GENOMIC DNA]</scope>
    <source>
        <strain>ATCC 39006 / SC 11482</strain>
    </source>
</reference>
<reference key="2">
    <citation type="journal article" date="2005" name="Mol. Microbiol.">
        <title>Biosynthesis of the red antibiotic, prodigiosin, in Serratia: identification of a novel 2-methyl-3-n-amyl-pyrrole (MAP) assembly pathway, definition of the terminal condensing enzyme, and implications for undecylprodigiosin biosynthesis in Streptomyces.</title>
        <authorList>
            <person name="Williamson N.R."/>
            <person name="Simonsen H.T."/>
            <person name="Ahmed R.A."/>
            <person name="Goldet G."/>
            <person name="Slater H."/>
            <person name="Woodley L."/>
            <person name="Leeper F.J."/>
            <person name="Salmond G.P."/>
        </authorList>
    </citation>
    <scope>FUNCTION</scope>
    <scope>DISRUPTION PHENOTYPE</scope>
    <scope>PATHWAY</scope>
    <source>
        <strain>ATCC 39006 / SC 11482</strain>
    </source>
</reference>
<gene>
    <name evidence="4" type="primary">pigD</name>
</gene>
<organism>
    <name type="scientific">Serratia sp. (strain ATCC 39006)</name>
    <name type="common">Prodigiosinella confusarubida</name>
    <dbReference type="NCBI Taxonomy" id="104623"/>
    <lineage>
        <taxon>Bacteria</taxon>
        <taxon>Pseudomonadati</taxon>
        <taxon>Pseudomonadota</taxon>
        <taxon>Gammaproteobacteria</taxon>
        <taxon>Enterobacterales</taxon>
        <taxon>Pectobacteriaceae</taxon>
        <taxon>Prodigiosinella</taxon>
    </lineage>
</organism>
<accession>Q5W268</accession>
<evidence type="ECO:0000250" key="1">
    <source>
        <dbReference type="UniProtKB" id="Q5W251"/>
    </source>
</evidence>
<evidence type="ECO:0000256" key="2">
    <source>
        <dbReference type="SAM" id="MobiDB-lite"/>
    </source>
</evidence>
<evidence type="ECO:0000269" key="3">
    <source>
    </source>
</evidence>
<evidence type="ECO:0000303" key="4">
    <source>
    </source>
</evidence>
<evidence type="ECO:0000303" key="5">
    <source>
    </source>
</evidence>
<evidence type="ECO:0000305" key="6"/>
<evidence type="ECO:0000305" key="7">
    <source>
    </source>
</evidence>
<comment type="function">
    <text evidence="3">Involved in the biosynthesis of 2-methyl-3-n-amyl-pyrrole (MAP), one of the terminal products involved in the biosynthesis of the red antibiotic prodigiosin (Pig). Catalyzes the decarboxylation of pyruvate, followed by the modification of the resulting two-carbon fragment acetaldehyde at the C3 position of the 2-octenal (1,2-addition of acetaldehyde) giving 3-acetyloctanal.</text>
</comment>
<comment type="catalytic activity">
    <reaction evidence="1">
        <text>(2E)-octenal + pyruvate + H(+) = (S)-3-acetyloctanal + CO2</text>
        <dbReference type="Rhea" id="RHEA:42832"/>
        <dbReference type="ChEBI" id="CHEBI:15361"/>
        <dbReference type="ChEBI" id="CHEBI:15378"/>
        <dbReference type="ChEBI" id="CHEBI:16526"/>
        <dbReference type="ChEBI" id="CHEBI:61748"/>
        <dbReference type="ChEBI" id="CHEBI:82759"/>
        <dbReference type="EC" id="2.2.1.12"/>
    </reaction>
</comment>
<comment type="cofactor">
    <cofactor evidence="1">
        <name>thiamine diphosphate</name>
        <dbReference type="ChEBI" id="CHEBI:58937"/>
    </cofactor>
</comment>
<comment type="pathway">
    <text evidence="7">Antibiotic biosynthesis; prodigiosin biosynthesis.</text>
</comment>
<comment type="disruption phenotype">
    <text evidence="3">Cells lacking this gene show a white phenotype and produce 4-hydroxy-2,2'-bipyrrole-5-carbaldehyde (HBC), 4- methoxy-2,2'-bipyrrole-5-carbaldehyde (MBC) and 4-hydroxy-2,2'-bipyrrole-5-methanol (HBM).</text>
</comment>
<comment type="similarity">
    <text evidence="6">Belongs to the TPP enzyme family.</text>
</comment>
<name>PIGD_SERS3</name>
<protein>
    <recommendedName>
        <fullName evidence="6">Thiamine diphosphate dependent-3-acetyloctanal synthase PigD</fullName>
        <shortName evidence="1">ThDP-dependent enzyme PigD</shortName>
        <ecNumber evidence="1">2.2.1.12</ecNumber>
    </recommendedName>
    <alternativeName>
        <fullName evidence="5">Terminal condensing enzyme</fullName>
    </alternativeName>
</protein>
<dbReference type="EC" id="2.2.1.12" evidence="1"/>
<dbReference type="EMBL" id="AJ833001">
    <property type="protein sequence ID" value="CAH55632.1"/>
    <property type="molecule type" value="Genomic_DNA"/>
</dbReference>
<dbReference type="RefSeq" id="WP_021014642.1">
    <property type="nucleotide sequence ID" value="NZ_CP025084.1"/>
</dbReference>
<dbReference type="SMR" id="Q5W268"/>
<dbReference type="STRING" id="104623.Ser39006_01372"/>
<dbReference type="KEGG" id="ag:CAH55632"/>
<dbReference type="eggNOG" id="COG0028">
    <property type="taxonomic scope" value="Bacteria"/>
</dbReference>
<dbReference type="OrthoDB" id="3885828at2"/>
<dbReference type="UniPathway" id="UPA01072"/>
<dbReference type="GO" id="GO:0030976">
    <property type="term" value="F:thiamine pyrophosphate binding"/>
    <property type="evidence" value="ECO:0000250"/>
    <property type="project" value="UniProtKB"/>
</dbReference>
<dbReference type="GO" id="GO:0016744">
    <property type="term" value="F:transketolase or transaldolase activity"/>
    <property type="evidence" value="ECO:0000250"/>
    <property type="project" value="UniProtKB"/>
</dbReference>
<dbReference type="GO" id="GO:0017000">
    <property type="term" value="P:antibiotic biosynthetic process"/>
    <property type="evidence" value="ECO:0000315"/>
    <property type="project" value="UniProtKB"/>
</dbReference>
<dbReference type="Gene3D" id="3.40.50.970">
    <property type="match status" value="1"/>
</dbReference>
<dbReference type="Gene3D" id="3.40.50.1220">
    <property type="entry name" value="TPP-binding domain"/>
    <property type="match status" value="1"/>
</dbReference>
<proteinExistence type="inferred from homology"/>
<keyword id="KW-0045">Antibiotic biosynthesis</keyword>
<keyword id="KW-0786">Thiamine pyrophosphate</keyword>
<keyword id="KW-0808">Transferase</keyword>
<feature type="chain" id="PRO_0000436240" description="Thiamine diphosphate dependent-3-acetyloctanal synthase PigD">
    <location>
        <begin position="1"/>
        <end position="866"/>
    </location>
</feature>
<feature type="region of interest" description="Disordered" evidence="2">
    <location>
        <begin position="826"/>
        <end position="866"/>
    </location>
</feature>
<feature type="compositionally biased region" description="Basic and acidic residues" evidence="2">
    <location>
        <begin position="828"/>
        <end position="845"/>
    </location>
</feature>
<feature type="compositionally biased region" description="Polar residues" evidence="2">
    <location>
        <begin position="849"/>
        <end position="866"/>
    </location>
</feature>
<sequence length="866" mass="96977">MTTMIGQTRQAGSSSYEQAWQAEQAPCPGMEPDTLTVGVVVVTRNPTFFQTGLSVLNDIRDYVFNRVHIQSELPLKLSELASDPLYSEAREKAIHFLKNQSKALNIQVIQCASLAEATGKIIYTHALEQQPEFQMGMLFYDQTSLGNVDDSIEKIDRDLDAFYSAMQRGGIPAFYTTFSTVTFIRDVRSSFRYLPQQYREIVRSEDPAIFQTELLCLWMDFFEMNYTNRRVKPIGALALHNTLAEQLIQFFERTAASRWLVSYYTGSIISNLIGYLDRHAEAHGALVLRGPNEHAIACGAMANWQLYRMPFLGVVTSGMMDEFKGTLINLKETAAQGIIVAAENRNNQWYSFQGTQTPTEDMRDVLAAKRIPYVYIDDVDGIADGLAEVFRLYHQAQGPVVILATQNVLESTLSLEPVPGDLPPVSGLPAYDCPPISDSFEQAMALINEGPEKLVWQLGPVSDDEYALVHEIADAAGLALVDSLAHPGSAPKYYQGKRNPHYLGTLAIYGYSPRVYNFLHTNDKLNPMSDQSVFMIKSRVAQITTPFSDGRLERKVHLVQLTHDERHLSPYADLKLHMDCLTFLRAVKANLHVDAALREKRKALIAAYLDSPSDVVSQLPSLPMSANYFFCQLNRVIENLIKTENFDFTGVYDVGRCGISAVRNVAKTRRGFSGWYGRALMGDALLATSYLAHTSPTHVVAFIGDGAKGIVPDILPAFIDNILTHPQLLNKSITIFYFCNGGLSVINTYQERILFNRTSRQMRLVNVDQPAFEQTVDDFHIQGKTLTHFDEDTIRHALMTPKRLNLFSVVLGHNNEGDGISLATAKGWQRDPSDREALQERKDWAARQPESTSTSFDQGQNKEAIS</sequence>